<comment type="similarity">
    <text evidence="1">Belongs to the universal ribosomal protein uS9 family.</text>
</comment>
<keyword id="KW-1185">Reference proteome</keyword>
<keyword id="KW-0687">Ribonucleoprotein</keyword>
<keyword id="KW-0689">Ribosomal protein</keyword>
<proteinExistence type="inferred from homology"/>
<sequence length="130" mass="14474">MAAEQYYGTGRRKTATARVFISVGTGKVTINDRPLDEYFGREVARMIVCQPLEATDNVEKFDIKATVKGGGSFGQAGAIRHGLTRALMAYDEAMRSTLRAAGYVTRDAREVERKKVGLRKARKKPQFSKR</sequence>
<feature type="chain" id="PRO_1000211846" description="Small ribosomal subunit protein uS9">
    <location>
        <begin position="1"/>
        <end position="130"/>
    </location>
</feature>
<protein>
    <recommendedName>
        <fullName evidence="1">Small ribosomal subunit protein uS9</fullName>
    </recommendedName>
    <alternativeName>
        <fullName evidence="2">30S ribosomal protein S9</fullName>
    </alternativeName>
</protein>
<organism>
    <name type="scientific">Teredinibacter turnerae (strain ATCC 39867 / T7901)</name>
    <dbReference type="NCBI Taxonomy" id="377629"/>
    <lineage>
        <taxon>Bacteria</taxon>
        <taxon>Pseudomonadati</taxon>
        <taxon>Pseudomonadota</taxon>
        <taxon>Gammaproteobacteria</taxon>
        <taxon>Cellvibrionales</taxon>
        <taxon>Cellvibrionaceae</taxon>
        <taxon>Teredinibacter</taxon>
    </lineage>
</organism>
<evidence type="ECO:0000255" key="1">
    <source>
        <dbReference type="HAMAP-Rule" id="MF_00532"/>
    </source>
</evidence>
<evidence type="ECO:0000305" key="2"/>
<dbReference type="EMBL" id="CP001614">
    <property type="protein sequence ID" value="ACR14001.1"/>
    <property type="molecule type" value="Genomic_DNA"/>
</dbReference>
<dbReference type="RefSeq" id="WP_015820116.1">
    <property type="nucleotide sequence ID" value="NC_012997.1"/>
</dbReference>
<dbReference type="SMR" id="C5BS65"/>
<dbReference type="STRING" id="377629.TERTU_3679"/>
<dbReference type="KEGG" id="ttu:TERTU_3679"/>
<dbReference type="eggNOG" id="COG0103">
    <property type="taxonomic scope" value="Bacteria"/>
</dbReference>
<dbReference type="HOGENOM" id="CLU_046483_2_1_6"/>
<dbReference type="OrthoDB" id="9803965at2"/>
<dbReference type="Proteomes" id="UP000009080">
    <property type="component" value="Chromosome"/>
</dbReference>
<dbReference type="GO" id="GO:0022627">
    <property type="term" value="C:cytosolic small ribosomal subunit"/>
    <property type="evidence" value="ECO:0007669"/>
    <property type="project" value="TreeGrafter"/>
</dbReference>
<dbReference type="GO" id="GO:0003723">
    <property type="term" value="F:RNA binding"/>
    <property type="evidence" value="ECO:0007669"/>
    <property type="project" value="TreeGrafter"/>
</dbReference>
<dbReference type="GO" id="GO:0003735">
    <property type="term" value="F:structural constituent of ribosome"/>
    <property type="evidence" value="ECO:0007669"/>
    <property type="project" value="InterPro"/>
</dbReference>
<dbReference type="GO" id="GO:0006412">
    <property type="term" value="P:translation"/>
    <property type="evidence" value="ECO:0007669"/>
    <property type="project" value="UniProtKB-UniRule"/>
</dbReference>
<dbReference type="FunFam" id="3.30.230.10:FF:000001">
    <property type="entry name" value="30S ribosomal protein S9"/>
    <property type="match status" value="1"/>
</dbReference>
<dbReference type="Gene3D" id="3.30.230.10">
    <property type="match status" value="1"/>
</dbReference>
<dbReference type="HAMAP" id="MF_00532_B">
    <property type="entry name" value="Ribosomal_uS9_B"/>
    <property type="match status" value="1"/>
</dbReference>
<dbReference type="InterPro" id="IPR020568">
    <property type="entry name" value="Ribosomal_Su5_D2-typ_SF"/>
</dbReference>
<dbReference type="InterPro" id="IPR000754">
    <property type="entry name" value="Ribosomal_uS9"/>
</dbReference>
<dbReference type="InterPro" id="IPR023035">
    <property type="entry name" value="Ribosomal_uS9_bac/plastid"/>
</dbReference>
<dbReference type="InterPro" id="IPR020574">
    <property type="entry name" value="Ribosomal_uS9_CS"/>
</dbReference>
<dbReference type="InterPro" id="IPR014721">
    <property type="entry name" value="Ribsml_uS5_D2-typ_fold_subgr"/>
</dbReference>
<dbReference type="NCBIfam" id="NF001099">
    <property type="entry name" value="PRK00132.1"/>
    <property type="match status" value="1"/>
</dbReference>
<dbReference type="PANTHER" id="PTHR21569">
    <property type="entry name" value="RIBOSOMAL PROTEIN S9"/>
    <property type="match status" value="1"/>
</dbReference>
<dbReference type="PANTHER" id="PTHR21569:SF1">
    <property type="entry name" value="SMALL RIBOSOMAL SUBUNIT PROTEIN US9M"/>
    <property type="match status" value="1"/>
</dbReference>
<dbReference type="Pfam" id="PF00380">
    <property type="entry name" value="Ribosomal_S9"/>
    <property type="match status" value="1"/>
</dbReference>
<dbReference type="SUPFAM" id="SSF54211">
    <property type="entry name" value="Ribosomal protein S5 domain 2-like"/>
    <property type="match status" value="1"/>
</dbReference>
<dbReference type="PROSITE" id="PS00360">
    <property type="entry name" value="RIBOSOMAL_S9"/>
    <property type="match status" value="1"/>
</dbReference>
<accession>C5BS65</accession>
<gene>
    <name evidence="1" type="primary">rpsI</name>
    <name type="ordered locus">TERTU_3679</name>
</gene>
<name>RS9_TERTT</name>
<reference key="1">
    <citation type="journal article" date="2009" name="PLoS ONE">
        <title>The complete genome of Teredinibacter turnerae T7901: an intracellular endosymbiont of marine wood-boring bivalves (shipworms).</title>
        <authorList>
            <person name="Yang J.C."/>
            <person name="Madupu R."/>
            <person name="Durkin A.S."/>
            <person name="Ekborg N.A."/>
            <person name="Pedamallu C.S."/>
            <person name="Hostetler J.B."/>
            <person name="Radune D."/>
            <person name="Toms B.S."/>
            <person name="Henrissat B."/>
            <person name="Coutinho P.M."/>
            <person name="Schwarz S."/>
            <person name="Field L."/>
            <person name="Trindade-Silva A.E."/>
            <person name="Soares C.A.G."/>
            <person name="Elshahawi S."/>
            <person name="Hanora A."/>
            <person name="Schmidt E.W."/>
            <person name="Haygood M.G."/>
            <person name="Posfai J."/>
            <person name="Benner J."/>
            <person name="Madinger C."/>
            <person name="Nove J."/>
            <person name="Anton B."/>
            <person name="Chaudhary K."/>
            <person name="Foster J."/>
            <person name="Holman A."/>
            <person name="Kumar S."/>
            <person name="Lessard P.A."/>
            <person name="Luyten Y.A."/>
            <person name="Slatko B."/>
            <person name="Wood N."/>
            <person name="Wu B."/>
            <person name="Teplitski M."/>
            <person name="Mougous J.D."/>
            <person name="Ward N."/>
            <person name="Eisen J.A."/>
            <person name="Badger J.H."/>
            <person name="Distel D.L."/>
        </authorList>
    </citation>
    <scope>NUCLEOTIDE SEQUENCE [LARGE SCALE GENOMIC DNA]</scope>
    <source>
        <strain>ATCC 39867 / T7901</strain>
    </source>
</reference>